<accession>O61387</accession>
<gene>
    <name type="primary">CYP6B7</name>
</gene>
<protein>
    <recommendedName>
        <fullName>Cytochrome P450 6B7</fullName>
        <ecNumber>1.14.14.1</ecNumber>
    </recommendedName>
    <alternativeName>
        <fullName>CYPVIB7</fullName>
    </alternativeName>
</protein>
<evidence type="ECO:0000250" key="1"/>
<evidence type="ECO:0000305" key="2"/>
<organism>
    <name type="scientific">Helicoverpa armigera</name>
    <name type="common">Cotton bollworm</name>
    <name type="synonym">Heliothis armigera</name>
    <dbReference type="NCBI Taxonomy" id="29058"/>
    <lineage>
        <taxon>Eukaryota</taxon>
        <taxon>Metazoa</taxon>
        <taxon>Ecdysozoa</taxon>
        <taxon>Arthropoda</taxon>
        <taxon>Hexapoda</taxon>
        <taxon>Insecta</taxon>
        <taxon>Pterygota</taxon>
        <taxon>Neoptera</taxon>
        <taxon>Endopterygota</taxon>
        <taxon>Lepidoptera</taxon>
        <taxon>Glossata</taxon>
        <taxon>Ditrysia</taxon>
        <taxon>Noctuoidea</taxon>
        <taxon>Noctuidae</taxon>
        <taxon>Heliothinae</taxon>
        <taxon>Helicoverpa</taxon>
    </lineage>
</organism>
<sequence length="504" mass="58218">MWVLYLPAVLSVLIVTLYLYFTRTFNYWKKRNVRGPEPTVFFGNLKDSTLRKKNIGIVMEEIYNQFPYEKVVGMYRMTTPCLLVRDFHVIKHIMIKDFEAFRDRGVEFSKEGLGQNLFHADGETWRALRNRFTPIFTSGKLKNMFYLMHEGADNFIDHVSKECEKKQEFEVHSLLQTYTMSTISSCAFGVSYNSISDKVQTLEIVDKIISEPSYAIELDYMYPKLLAKLNLSIIPTPVQHFFKSLVDNIISQRNGKPAGRNDFMDLILELRQMGEVTSNKYLDGVTSLEITDEVICAQAFVFYVAGYETSATTMSYLIYQLSLNQDVQNKLIAEVDEAIKASDGKVTYDTVKEMKYLNKVFDETLRMYSIVEPLQRKATRDYQIPGTDVVIEKDTMVLISPRGIHYDPKYYDNPKQFNPDRFDAEEVGKRHPCAYLPFGLGQRNCIGMRFGRLQSLLCITKILSKFRIEPSKNTDRNLQVEPRRVTIGPKGGIRVNIVPRKIVS</sequence>
<comment type="catalytic activity">
    <reaction>
        <text>an organic molecule + reduced [NADPH--hemoprotein reductase] + O2 = an alcohol + oxidized [NADPH--hemoprotein reductase] + H2O + H(+)</text>
        <dbReference type="Rhea" id="RHEA:17149"/>
        <dbReference type="Rhea" id="RHEA-COMP:11964"/>
        <dbReference type="Rhea" id="RHEA-COMP:11965"/>
        <dbReference type="ChEBI" id="CHEBI:15377"/>
        <dbReference type="ChEBI" id="CHEBI:15378"/>
        <dbReference type="ChEBI" id="CHEBI:15379"/>
        <dbReference type="ChEBI" id="CHEBI:30879"/>
        <dbReference type="ChEBI" id="CHEBI:57618"/>
        <dbReference type="ChEBI" id="CHEBI:58210"/>
        <dbReference type="ChEBI" id="CHEBI:142491"/>
        <dbReference type="EC" id="1.14.14.1"/>
    </reaction>
</comment>
<comment type="cofactor">
    <cofactor evidence="1">
        <name>heme</name>
        <dbReference type="ChEBI" id="CHEBI:30413"/>
    </cofactor>
</comment>
<comment type="subcellular location">
    <subcellularLocation>
        <location evidence="2">Endoplasmic reticulum membrane</location>
        <topology evidence="2">Peripheral membrane protein</topology>
    </subcellularLocation>
    <subcellularLocation>
        <location evidence="2">Microsome membrane</location>
        <topology evidence="2">Peripheral membrane protein</topology>
    </subcellularLocation>
</comment>
<comment type="induction">
    <text>By treatment with the monoterpene, alpha-pinene.</text>
</comment>
<comment type="similarity">
    <text evidence="2">Belongs to the cytochrome P450 family.</text>
</comment>
<dbReference type="EC" id="1.14.14.1"/>
<dbReference type="EMBL" id="AF031468">
    <property type="protein sequence ID" value="AAC09227.1"/>
    <property type="molecule type" value="mRNA"/>
</dbReference>
<dbReference type="SMR" id="O61387"/>
<dbReference type="OrthoDB" id="2789670at2759"/>
<dbReference type="GO" id="GO:0005789">
    <property type="term" value="C:endoplasmic reticulum membrane"/>
    <property type="evidence" value="ECO:0007669"/>
    <property type="project" value="UniProtKB-SubCell"/>
</dbReference>
<dbReference type="GO" id="GO:0020037">
    <property type="term" value="F:heme binding"/>
    <property type="evidence" value="ECO:0007669"/>
    <property type="project" value="InterPro"/>
</dbReference>
<dbReference type="GO" id="GO:0005506">
    <property type="term" value="F:iron ion binding"/>
    <property type="evidence" value="ECO:0007669"/>
    <property type="project" value="InterPro"/>
</dbReference>
<dbReference type="GO" id="GO:0016712">
    <property type="term" value="F:oxidoreductase activity, acting on paired donors, with incorporation or reduction of molecular oxygen, reduced flavin or flavoprotein as one donor, and incorporation of one atom of oxygen"/>
    <property type="evidence" value="ECO:0007669"/>
    <property type="project" value="UniProtKB-EC"/>
</dbReference>
<dbReference type="CDD" id="cd11056">
    <property type="entry name" value="CYP6-like"/>
    <property type="match status" value="1"/>
</dbReference>
<dbReference type="FunFam" id="1.10.630.10:FF:000042">
    <property type="entry name" value="Cytochrome P450"/>
    <property type="match status" value="1"/>
</dbReference>
<dbReference type="Gene3D" id="1.10.630.10">
    <property type="entry name" value="Cytochrome P450"/>
    <property type="match status" value="1"/>
</dbReference>
<dbReference type="InterPro" id="IPR001128">
    <property type="entry name" value="Cyt_P450"/>
</dbReference>
<dbReference type="InterPro" id="IPR017972">
    <property type="entry name" value="Cyt_P450_CS"/>
</dbReference>
<dbReference type="InterPro" id="IPR002401">
    <property type="entry name" value="Cyt_P450_E_grp-I"/>
</dbReference>
<dbReference type="InterPro" id="IPR036396">
    <property type="entry name" value="Cyt_P450_sf"/>
</dbReference>
<dbReference type="InterPro" id="IPR050476">
    <property type="entry name" value="Insect_CytP450_Detox"/>
</dbReference>
<dbReference type="PANTHER" id="PTHR24292">
    <property type="entry name" value="CYTOCHROME P450"/>
    <property type="match status" value="1"/>
</dbReference>
<dbReference type="PANTHER" id="PTHR24292:SF100">
    <property type="entry name" value="CYTOCHROME P450 6A16, ISOFORM B-RELATED"/>
    <property type="match status" value="1"/>
</dbReference>
<dbReference type="Pfam" id="PF00067">
    <property type="entry name" value="p450"/>
    <property type="match status" value="1"/>
</dbReference>
<dbReference type="PRINTS" id="PR00463">
    <property type="entry name" value="EP450I"/>
</dbReference>
<dbReference type="PRINTS" id="PR00385">
    <property type="entry name" value="P450"/>
</dbReference>
<dbReference type="SUPFAM" id="SSF48264">
    <property type="entry name" value="Cytochrome P450"/>
    <property type="match status" value="1"/>
</dbReference>
<dbReference type="PROSITE" id="PS00086">
    <property type="entry name" value="CYTOCHROME_P450"/>
    <property type="match status" value="1"/>
</dbReference>
<reference key="1">
    <citation type="journal article" date="1998" name="Insect Biochem. Mol. Biol.">
        <title>Isolation and characterization of two cytochrome P450 cDNA clones for CYP6B6 and CYP6B7 from Helicoverpa armigera (Hubner): possible involvement of CYP6B7 in pyrethroid resistance.</title>
        <authorList>
            <person name="Ranasinghe C."/>
            <person name="Hobbs A.A."/>
        </authorList>
    </citation>
    <scope>NUCLEOTIDE SEQUENCE [MRNA]</scope>
</reference>
<proteinExistence type="evidence at transcript level"/>
<name>CP6B7_HELAM</name>
<keyword id="KW-0256">Endoplasmic reticulum</keyword>
<keyword id="KW-0349">Heme</keyword>
<keyword id="KW-0408">Iron</keyword>
<keyword id="KW-0472">Membrane</keyword>
<keyword id="KW-0479">Metal-binding</keyword>
<keyword id="KW-0492">Microsome</keyword>
<keyword id="KW-0503">Monooxygenase</keyword>
<keyword id="KW-0560">Oxidoreductase</keyword>
<feature type="chain" id="PRO_0000051899" description="Cytochrome P450 6B7">
    <location>
        <begin position="1"/>
        <end position="504"/>
    </location>
</feature>
<feature type="binding site" description="axial binding residue" evidence="1">
    <location>
        <position position="445"/>
    </location>
    <ligand>
        <name>heme</name>
        <dbReference type="ChEBI" id="CHEBI:30413"/>
    </ligand>
    <ligandPart>
        <name>Fe</name>
        <dbReference type="ChEBI" id="CHEBI:18248"/>
    </ligandPart>
</feature>